<gene>
    <name type="primary">hcaC</name>
    <name type="ordered locus">Z3811</name>
    <name type="ordered locus">ECs3406</name>
</gene>
<comment type="function">
    <text evidence="1">Part of the multicomponent 3-phenylpropionate dioxygenase, that converts 3-phenylpropionic acid (PP) and cinnamic acid (CI) into 3-phenylpropionate-dihydrodiol (PP-dihydrodiol) and cinnamic acid-dihydrodiol (CI-dihydrodiol), respectively. This protein seems to be a 2Fe-2S ferredoxin (By similarity).</text>
</comment>
<comment type="cofactor">
    <cofactor evidence="1">
        <name>[2Fe-2S] cluster</name>
        <dbReference type="ChEBI" id="CHEBI:190135"/>
    </cofactor>
    <text evidence="1">Binds 1 [2Fe-2S] cluster per subunit.</text>
</comment>
<comment type="pathway">
    <text>Aromatic compound metabolism; 3-phenylpropanoate degradation.</text>
</comment>
<comment type="subunit">
    <text evidence="1">This dioxygenase system consists of four proteins: the two subunits of the hydroxylase component (HcaE and HcaF), a ferredoxin (HcaC) and a ferredoxin reductase (HcaD).</text>
</comment>
<comment type="similarity">
    <text evidence="3">Belongs to the bacterial ring-hydroxylating dioxygenase ferredoxin component family.</text>
</comment>
<name>HCAC_ECO57</name>
<feature type="chain" id="PRO_0000201689" description="3-phenylpropionate/cinnamic acid dioxygenase ferredoxin subunit">
    <location>
        <begin position="1"/>
        <end position="106"/>
    </location>
</feature>
<feature type="domain" description="Rieske">
    <location>
        <begin position="4"/>
        <end position="99"/>
    </location>
</feature>
<feature type="binding site" evidence="2">
    <location>
        <position position="42"/>
    </location>
    <ligand>
        <name>[2Fe-2S] cluster</name>
        <dbReference type="ChEBI" id="CHEBI:190135"/>
    </ligand>
</feature>
<feature type="binding site" evidence="2">
    <location>
        <position position="44"/>
    </location>
    <ligand>
        <name>[2Fe-2S] cluster</name>
        <dbReference type="ChEBI" id="CHEBI:190135"/>
    </ligand>
</feature>
<feature type="binding site" evidence="2">
    <location>
        <position position="62"/>
    </location>
    <ligand>
        <name>[2Fe-2S] cluster</name>
        <dbReference type="ChEBI" id="CHEBI:190135"/>
    </ligand>
</feature>
<feature type="binding site" evidence="2">
    <location>
        <position position="65"/>
    </location>
    <ligand>
        <name>[2Fe-2S] cluster</name>
        <dbReference type="ChEBI" id="CHEBI:190135"/>
    </ligand>
</feature>
<organism>
    <name type="scientific">Escherichia coli O157:H7</name>
    <dbReference type="NCBI Taxonomy" id="83334"/>
    <lineage>
        <taxon>Bacteria</taxon>
        <taxon>Pseudomonadati</taxon>
        <taxon>Pseudomonadota</taxon>
        <taxon>Gammaproteobacteria</taxon>
        <taxon>Enterobacterales</taxon>
        <taxon>Enterobacteriaceae</taxon>
        <taxon>Escherichia</taxon>
    </lineage>
</organism>
<protein>
    <recommendedName>
        <fullName>3-phenylpropionate/cinnamic acid dioxygenase ferredoxin subunit</fullName>
    </recommendedName>
</protein>
<proteinExistence type="inferred from homology"/>
<reference key="1">
    <citation type="journal article" date="2001" name="Nature">
        <title>Genome sequence of enterohaemorrhagic Escherichia coli O157:H7.</title>
        <authorList>
            <person name="Perna N.T."/>
            <person name="Plunkett G. III"/>
            <person name="Burland V."/>
            <person name="Mau B."/>
            <person name="Glasner J.D."/>
            <person name="Rose D.J."/>
            <person name="Mayhew G.F."/>
            <person name="Evans P.S."/>
            <person name="Gregor J."/>
            <person name="Kirkpatrick H.A."/>
            <person name="Posfai G."/>
            <person name="Hackett J."/>
            <person name="Klink S."/>
            <person name="Boutin A."/>
            <person name="Shao Y."/>
            <person name="Miller L."/>
            <person name="Grotbeck E.J."/>
            <person name="Davis N.W."/>
            <person name="Lim A."/>
            <person name="Dimalanta E.T."/>
            <person name="Potamousis K."/>
            <person name="Apodaca J."/>
            <person name="Anantharaman T.S."/>
            <person name="Lin J."/>
            <person name="Yen G."/>
            <person name="Schwartz D.C."/>
            <person name="Welch R.A."/>
            <person name="Blattner F.R."/>
        </authorList>
    </citation>
    <scope>NUCLEOTIDE SEQUENCE [LARGE SCALE GENOMIC DNA]</scope>
    <source>
        <strain>O157:H7 / EDL933 / ATCC 700927 / EHEC</strain>
    </source>
</reference>
<reference key="2">
    <citation type="journal article" date="2001" name="DNA Res.">
        <title>Complete genome sequence of enterohemorrhagic Escherichia coli O157:H7 and genomic comparison with a laboratory strain K-12.</title>
        <authorList>
            <person name="Hayashi T."/>
            <person name="Makino K."/>
            <person name="Ohnishi M."/>
            <person name="Kurokawa K."/>
            <person name="Ishii K."/>
            <person name="Yokoyama K."/>
            <person name="Han C.-G."/>
            <person name="Ohtsubo E."/>
            <person name="Nakayama K."/>
            <person name="Murata T."/>
            <person name="Tanaka M."/>
            <person name="Tobe T."/>
            <person name="Iida T."/>
            <person name="Takami H."/>
            <person name="Honda T."/>
            <person name="Sasakawa C."/>
            <person name="Ogasawara N."/>
            <person name="Yasunaga T."/>
            <person name="Kuhara S."/>
            <person name="Shiba T."/>
            <person name="Hattori M."/>
            <person name="Shinagawa H."/>
        </authorList>
    </citation>
    <scope>NUCLEOTIDE SEQUENCE [LARGE SCALE GENOMIC DNA]</scope>
    <source>
        <strain>O157:H7 / Sakai / RIMD 0509952 / EHEC</strain>
    </source>
</reference>
<evidence type="ECO:0000250" key="1"/>
<evidence type="ECO:0000255" key="2"/>
<evidence type="ECO:0000305" key="3"/>
<accession>P0ABW1</accession>
<accession>O08099</accession>
<accession>P77266</accession>
<keyword id="KW-0001">2Fe-2S</keyword>
<keyword id="KW-0058">Aromatic hydrocarbons catabolism</keyword>
<keyword id="KW-0249">Electron transport</keyword>
<keyword id="KW-0408">Iron</keyword>
<keyword id="KW-0411">Iron-sulfur</keyword>
<keyword id="KW-0479">Metal-binding</keyword>
<keyword id="KW-1185">Reference proteome</keyword>
<keyword id="KW-0813">Transport</keyword>
<dbReference type="EMBL" id="AE005174">
    <property type="protein sequence ID" value="AAG57653.1"/>
    <property type="molecule type" value="Genomic_DNA"/>
</dbReference>
<dbReference type="EMBL" id="BA000007">
    <property type="protein sequence ID" value="BAB36829.1"/>
    <property type="molecule type" value="Genomic_DNA"/>
</dbReference>
<dbReference type="PIR" id="A85899">
    <property type="entry name" value="A85899"/>
</dbReference>
<dbReference type="PIR" id="F91054">
    <property type="entry name" value="F91054"/>
</dbReference>
<dbReference type="RefSeq" id="NP_311433.1">
    <property type="nucleotide sequence ID" value="NC_002695.1"/>
</dbReference>
<dbReference type="RefSeq" id="WP_001080102.1">
    <property type="nucleotide sequence ID" value="NZ_VOAI01000001.1"/>
</dbReference>
<dbReference type="SMR" id="P0ABW1"/>
<dbReference type="STRING" id="155864.Z3811"/>
<dbReference type="GeneID" id="914928"/>
<dbReference type="KEGG" id="ece:Z3811"/>
<dbReference type="KEGG" id="ecs:ECs_3406"/>
<dbReference type="PATRIC" id="fig|386585.9.peg.3558"/>
<dbReference type="eggNOG" id="COG2146">
    <property type="taxonomic scope" value="Bacteria"/>
</dbReference>
<dbReference type="HOGENOM" id="CLU_055690_5_2_6"/>
<dbReference type="OMA" id="TLECWLH"/>
<dbReference type="UniPathway" id="UPA00714"/>
<dbReference type="Proteomes" id="UP000000558">
    <property type="component" value="Chromosome"/>
</dbReference>
<dbReference type="Proteomes" id="UP000002519">
    <property type="component" value="Chromosome"/>
</dbReference>
<dbReference type="GO" id="GO:0051537">
    <property type="term" value="F:2 iron, 2 sulfur cluster binding"/>
    <property type="evidence" value="ECO:0007669"/>
    <property type="project" value="UniProtKB-KW"/>
</dbReference>
<dbReference type="GO" id="GO:0008695">
    <property type="term" value="F:3-phenylpropionate dioxygenase activity"/>
    <property type="evidence" value="ECO:0007669"/>
    <property type="project" value="UniProtKB-UniRule"/>
</dbReference>
<dbReference type="GO" id="GO:0046872">
    <property type="term" value="F:metal ion binding"/>
    <property type="evidence" value="ECO:0007669"/>
    <property type="project" value="UniProtKB-KW"/>
</dbReference>
<dbReference type="GO" id="GO:0019380">
    <property type="term" value="P:3-phenylpropionate catabolic process"/>
    <property type="evidence" value="ECO:0007669"/>
    <property type="project" value="UniProtKB-UniRule"/>
</dbReference>
<dbReference type="CDD" id="cd03528">
    <property type="entry name" value="Rieske_RO_ferredoxin"/>
    <property type="match status" value="1"/>
</dbReference>
<dbReference type="FunFam" id="2.102.10.10:FF:000005">
    <property type="entry name" value="3-phenylpropionate/cinnamic acid dioxygenase ferredoxin subunit"/>
    <property type="match status" value="1"/>
</dbReference>
<dbReference type="Gene3D" id="2.102.10.10">
    <property type="entry name" value="Rieske [2Fe-2S] iron-sulphur domain"/>
    <property type="match status" value="1"/>
</dbReference>
<dbReference type="HAMAP" id="MF_01650">
    <property type="entry name" value="HcaC"/>
    <property type="match status" value="1"/>
</dbReference>
<dbReference type="InterPro" id="IPR023739">
    <property type="entry name" value="HcaC"/>
</dbReference>
<dbReference type="InterPro" id="IPR017941">
    <property type="entry name" value="Rieske_2Fe-2S"/>
</dbReference>
<dbReference type="InterPro" id="IPR036922">
    <property type="entry name" value="Rieske_2Fe-2S_sf"/>
</dbReference>
<dbReference type="InterPro" id="IPR053387">
    <property type="entry name" value="Ring-hydroxylating_fd"/>
</dbReference>
<dbReference type="NCBIfam" id="NF042948">
    <property type="entry name" value="3PPDioc_HcaC"/>
    <property type="match status" value="1"/>
</dbReference>
<dbReference type="NCBIfam" id="NF007422">
    <property type="entry name" value="PRK09965.1"/>
    <property type="match status" value="1"/>
</dbReference>
<dbReference type="PANTHER" id="PTHR21496:SF23">
    <property type="entry name" value="3-PHENYLPROPIONATE_CINNAMIC ACID DIOXYGENASE FERREDOXIN SUBUNIT"/>
    <property type="match status" value="1"/>
</dbReference>
<dbReference type="PANTHER" id="PTHR21496">
    <property type="entry name" value="FERREDOXIN-RELATED"/>
    <property type="match status" value="1"/>
</dbReference>
<dbReference type="Pfam" id="PF00355">
    <property type="entry name" value="Rieske"/>
    <property type="match status" value="1"/>
</dbReference>
<dbReference type="SUPFAM" id="SSF50022">
    <property type="entry name" value="ISP domain"/>
    <property type="match status" value="1"/>
</dbReference>
<dbReference type="PROSITE" id="PS51296">
    <property type="entry name" value="RIESKE"/>
    <property type="match status" value="1"/>
</dbReference>
<sequence length="106" mass="11329">MNRIYACPVADVPEGEALRIDTSPVIALFNVGGEFYAINDRCSHGNASMSEGYLEDDATVECPLHAASFCLKTGKALCLPATDPLTTYPVHVEGGDIFIDLPEAQP</sequence>